<evidence type="ECO:0000255" key="1">
    <source>
        <dbReference type="PROSITE-ProRule" id="PRU00227"/>
    </source>
</evidence>
<evidence type="ECO:0000256" key="2">
    <source>
        <dbReference type="SAM" id="MobiDB-lite"/>
    </source>
</evidence>
<evidence type="ECO:0000269" key="3">
    <source>
    </source>
</evidence>
<evidence type="ECO:0000303" key="4">
    <source ref="1"/>
</evidence>
<evidence type="ECO:0000305" key="5"/>
<evidence type="ECO:0000305" key="6">
    <source>
    </source>
</evidence>
<accession>A0A3G9HCC8</accession>
<reference key="1">
    <citation type="submission" date="2014-06" db="EMBL/GenBank/DDBJ databases">
        <title>AAL-toxin biosynthetic genes cluster in the tomato pathotype of Alternaria alternata.</title>
        <authorList>
            <person name="Akagi Y."/>
            <person name="Akamatsu H."/>
            <person name="Takao K."/>
            <person name="Tsuge T."/>
            <person name="Kodama M."/>
        </authorList>
    </citation>
    <scope>NUCLEOTIDE SEQUENCE [GENOMIC DNA]</scope>
    <source>
        <strain>As-27</strain>
    </source>
</reference>
<reference key="2">
    <citation type="journal article" date="2009" name="Eukaryot. Cell">
        <title>Horizontal chromosome transfer, a mechanism for the evolution and differentiation of a plant-pathogenic fungus.</title>
        <authorList>
            <person name="Akagi Y."/>
            <person name="Akamatsu H."/>
            <person name="Otani H."/>
            <person name="Kodama M."/>
        </authorList>
    </citation>
    <scope>FUNCTION</scope>
</reference>
<feature type="chain" id="PRO_0000449865" description="AAl-toxin cluster-specific transcription factor ALT13">
    <location>
        <begin position="1"/>
        <end position="634"/>
    </location>
</feature>
<feature type="DNA-binding region" description="Zn(2)-C6 fungal-type" evidence="1">
    <location>
        <begin position="30"/>
        <end position="56"/>
    </location>
</feature>
<feature type="region of interest" description="Disordered" evidence="2">
    <location>
        <begin position="66"/>
        <end position="89"/>
    </location>
</feature>
<feature type="compositionally biased region" description="Polar residues" evidence="2">
    <location>
        <begin position="69"/>
        <end position="81"/>
    </location>
</feature>
<dbReference type="EMBL" id="AB969680">
    <property type="protein sequence ID" value="BBG74281.1"/>
    <property type="molecule type" value="Genomic_DNA"/>
</dbReference>
<dbReference type="SMR" id="A0A3G9HCC8"/>
<dbReference type="GO" id="GO:0005634">
    <property type="term" value="C:nucleus"/>
    <property type="evidence" value="ECO:0007669"/>
    <property type="project" value="UniProtKB-SubCell"/>
</dbReference>
<dbReference type="GO" id="GO:0003677">
    <property type="term" value="F:DNA binding"/>
    <property type="evidence" value="ECO:0007669"/>
    <property type="project" value="UniProtKB-KW"/>
</dbReference>
<dbReference type="GO" id="GO:0000981">
    <property type="term" value="F:DNA-binding transcription factor activity, RNA polymerase II-specific"/>
    <property type="evidence" value="ECO:0007669"/>
    <property type="project" value="InterPro"/>
</dbReference>
<dbReference type="GO" id="GO:0008270">
    <property type="term" value="F:zinc ion binding"/>
    <property type="evidence" value="ECO:0007669"/>
    <property type="project" value="InterPro"/>
</dbReference>
<dbReference type="GO" id="GO:0006351">
    <property type="term" value="P:DNA-templated transcription"/>
    <property type="evidence" value="ECO:0007669"/>
    <property type="project" value="InterPro"/>
</dbReference>
<dbReference type="CDD" id="cd12148">
    <property type="entry name" value="fungal_TF_MHR"/>
    <property type="match status" value="1"/>
</dbReference>
<dbReference type="CDD" id="cd00067">
    <property type="entry name" value="GAL4"/>
    <property type="match status" value="1"/>
</dbReference>
<dbReference type="Gene3D" id="4.10.240.10">
    <property type="entry name" value="Zn(2)-C6 fungal-type DNA-binding domain"/>
    <property type="match status" value="1"/>
</dbReference>
<dbReference type="InterPro" id="IPR050987">
    <property type="entry name" value="AtrR-like"/>
</dbReference>
<dbReference type="InterPro" id="IPR007219">
    <property type="entry name" value="Transcription_factor_dom_fun"/>
</dbReference>
<dbReference type="InterPro" id="IPR036864">
    <property type="entry name" value="Zn2-C6_fun-type_DNA-bd_sf"/>
</dbReference>
<dbReference type="InterPro" id="IPR001138">
    <property type="entry name" value="Zn2Cys6_DnaBD"/>
</dbReference>
<dbReference type="PANTHER" id="PTHR46910:SF3">
    <property type="entry name" value="HALOTOLERANCE PROTEIN 9-RELATED"/>
    <property type="match status" value="1"/>
</dbReference>
<dbReference type="PANTHER" id="PTHR46910">
    <property type="entry name" value="TRANSCRIPTION FACTOR PDR1"/>
    <property type="match status" value="1"/>
</dbReference>
<dbReference type="Pfam" id="PF04082">
    <property type="entry name" value="Fungal_trans"/>
    <property type="match status" value="1"/>
</dbReference>
<dbReference type="Pfam" id="PF00172">
    <property type="entry name" value="Zn_clus"/>
    <property type="match status" value="1"/>
</dbReference>
<dbReference type="SMART" id="SM00066">
    <property type="entry name" value="GAL4"/>
    <property type="match status" value="1"/>
</dbReference>
<dbReference type="SUPFAM" id="SSF57701">
    <property type="entry name" value="Zn2/Cys6 DNA-binding domain"/>
    <property type="match status" value="1"/>
</dbReference>
<dbReference type="PROSITE" id="PS00463">
    <property type="entry name" value="ZN2_CY6_FUNGAL_1"/>
    <property type="match status" value="1"/>
</dbReference>
<dbReference type="PROSITE" id="PS50048">
    <property type="entry name" value="ZN2_CY6_FUNGAL_2"/>
    <property type="match status" value="1"/>
</dbReference>
<sequence length="634" mass="70663">MSTEFVFVDHQAAQASVRQKPKLSRRRGACENCKRRKVRCSGANPCEQCLKVNVHCWYIGNNQSRRRSVPNSGADKNNQQGDTDRHNGARLGLESFGHLHFFSESFLDAQSIPMDQPPGSSPVMDFDPYDYDASPLSMSNEQTALIDWDQLEATSNYVALGISANSGNNFIADQCFSETRTATNRASKDPLNGGCHNTLHTGEFTHDSRTVDELLNDSIPLAFAASTKSSLSFDYVRSSLHSWLLTAMTELDGDENRHILQTFERLLNANSPVIRHPSLNEDVNSIEILNSLRSESSQNRALVYRCIDACFSNPNRVGIFLDRMTVEELVCQVLAHPFVSSPISIALCLSFLAVGSRDLSLDDDCREMNAMNLFRTALYIRPNPSSGPSLWTFQALLLMAHFSCDIGAESTTSLMTDTATCVQALRLHSSAAISNLCSSDSERVNLKRAFWTFFAVEKLHCIQEGLFPLIHGEYADHKVAAPQDPLCRRYDCLYSDVGYAKICSKILQQLQGQQDISQVGSSCCGRESYKQSPAFTANRLETMLMEWKGNLPFDGDGKNIFTATSPGERRIRLTCINMYHFAMIAIHSLPGVEDTDASKRQRCESAREILDMSEHITSADLLYDWSVPPLCPDC</sequence>
<name>ALT13_ALTAL</name>
<keyword id="KW-0238">DNA-binding</keyword>
<keyword id="KW-0479">Metal-binding</keyword>
<keyword id="KW-0539">Nucleus</keyword>
<keyword id="KW-0804">Transcription</keyword>
<keyword id="KW-0805">Transcription regulation</keyword>
<keyword id="KW-0862">Zinc</keyword>
<comment type="function">
    <text evidence="6">Transcription factor that regulates the expression of the gene cluster that mediates the biosynthesis of AAL-toxins, sphinganine-analog mycotoxins responsible for Alternaria stem canker on tomato by the tomato pathotype.</text>
</comment>
<comment type="subcellular location">
    <subcellularLocation>
        <location evidence="1">Nucleus</location>
    </subcellularLocation>
</comment>
<comment type="miscellaneous">
    <text evidence="3">Gene clusters encoding host-selective toxins (HSTs) are localized on conditionally dispensable chromosomes (CDCs), also called supernumerary chromosomes, where they are present in multiple copies. The CDCs are not essential for saprophytic growth but controls host-selective pathogenicity.</text>
</comment>
<organism>
    <name type="scientific">Alternaria alternata</name>
    <name type="common">Alternaria rot fungus</name>
    <name type="synonym">Torula alternata</name>
    <dbReference type="NCBI Taxonomy" id="5599"/>
    <lineage>
        <taxon>Eukaryota</taxon>
        <taxon>Fungi</taxon>
        <taxon>Dikarya</taxon>
        <taxon>Ascomycota</taxon>
        <taxon>Pezizomycotina</taxon>
        <taxon>Dothideomycetes</taxon>
        <taxon>Pleosporomycetidae</taxon>
        <taxon>Pleosporales</taxon>
        <taxon>Pleosporineae</taxon>
        <taxon>Pleosporaceae</taxon>
        <taxon>Alternaria</taxon>
        <taxon>Alternaria sect. Alternaria</taxon>
        <taxon>Alternaria alternata complex</taxon>
    </lineage>
</organism>
<protein>
    <recommendedName>
        <fullName evidence="5">AAl-toxin cluster-specific transcription factor ALT13</fullName>
    </recommendedName>
    <alternativeName>
        <fullName evidence="4">AAL-toxin biosynthesis cluster protein 13</fullName>
    </alternativeName>
</protein>
<proteinExistence type="inferred from homology"/>
<gene>
    <name evidence="4" type="primary">ALT13</name>
</gene>